<keyword id="KW-0256">Endoplasmic reticulum</keyword>
<keyword id="KW-0325">Glycoprotein</keyword>
<keyword id="KW-0333">Golgi apparatus</keyword>
<keyword id="KW-0472">Membrane</keyword>
<keyword id="KW-1185">Reference proteome</keyword>
<keyword id="KW-0735">Signal-anchor</keyword>
<keyword id="KW-0812">Transmembrane</keyword>
<keyword id="KW-1133">Transmembrane helix</keyword>
<evidence type="ECO:0000250" key="1"/>
<evidence type="ECO:0000250" key="2">
    <source>
        <dbReference type="UniProtKB" id="P32629"/>
    </source>
</evidence>
<evidence type="ECO:0000255" key="3"/>
<evidence type="ECO:0000256" key="4">
    <source>
        <dbReference type="SAM" id="MobiDB-lite"/>
    </source>
</evidence>
<evidence type="ECO:0000269" key="5">
    <source>
    </source>
</evidence>
<evidence type="ECO:0000269" key="6">
    <source>
    </source>
</evidence>
<evidence type="ECO:0000305" key="7"/>
<organism>
    <name type="scientific">Schizosaccharomyces pombe (strain 972 / ATCC 24843)</name>
    <name type="common">Fission yeast</name>
    <dbReference type="NCBI Taxonomy" id="284812"/>
    <lineage>
        <taxon>Eukaryota</taxon>
        <taxon>Fungi</taxon>
        <taxon>Dikarya</taxon>
        <taxon>Ascomycota</taxon>
        <taxon>Taphrinomycotina</taxon>
        <taxon>Schizosaccharomycetes</taxon>
        <taxon>Schizosaccharomycetales</taxon>
        <taxon>Schizosaccharomycetaceae</taxon>
        <taxon>Schizosaccharomyces</taxon>
    </lineage>
</organism>
<accession>O74745</accession>
<accession>Q9US67</accession>
<name>ANP1_SCHPO</name>
<proteinExistence type="inferred from homology"/>
<sequence length="430" mass="48991">MKANRDFGRDGGPFSITPNRFQPKSSGNPIFRQKTIRTVGIIALTLVLFLFFHRSFFSSFGEFPSFSSTANAPNSDVQEYDLRKVMNAKFTGDYSPKEKVLICAPLRNAAEHLNMFFGHMNNLTYPHELIDLAFLISDTDDNTLEVLKQHLDAIQNDEDESKHFNNVLIMLKDFGAIFGQEFSDRHGFAAQGPRRKLMARARNWLLSAAIQPYHSWVYWRDVDVETAPNTILEDLMRHDKDIIVPNVYRPLPDWLGNEQPYDLNSWAESETALQLADTLGEDDVIVEGYAEYATWRPHLAYLRDPNGDPSVEMPLDGIGGVSIMSKAKVHLEGCEFPAFSFEKHAETEGFGKMAKRMGFSVYGLPHYVIWHIYEPSDDDKRIMAEMERERKEREAAELEEAKKYQTAGFTQPDDQGAEEGPLAHADDHVD</sequence>
<protein>
    <recommendedName>
        <fullName>Mannan polymerase II complex anp1 subunit</fullName>
        <shortName>M-Pol II subunit anp1</shortName>
    </recommendedName>
</protein>
<reference key="1">
    <citation type="journal article" date="2002" name="Nature">
        <title>The genome sequence of Schizosaccharomyces pombe.</title>
        <authorList>
            <person name="Wood V."/>
            <person name="Gwilliam R."/>
            <person name="Rajandream M.A."/>
            <person name="Lyne M.H."/>
            <person name="Lyne R."/>
            <person name="Stewart A."/>
            <person name="Sgouros J.G."/>
            <person name="Peat N."/>
            <person name="Hayles J."/>
            <person name="Baker S.G."/>
            <person name="Basham D."/>
            <person name="Bowman S."/>
            <person name="Brooks K."/>
            <person name="Brown D."/>
            <person name="Brown S."/>
            <person name="Chillingworth T."/>
            <person name="Churcher C.M."/>
            <person name="Collins M."/>
            <person name="Connor R."/>
            <person name="Cronin A."/>
            <person name="Davis P."/>
            <person name="Feltwell T."/>
            <person name="Fraser A."/>
            <person name="Gentles S."/>
            <person name="Goble A."/>
            <person name="Hamlin N."/>
            <person name="Harris D.E."/>
            <person name="Hidalgo J."/>
            <person name="Hodgson G."/>
            <person name="Holroyd S."/>
            <person name="Hornsby T."/>
            <person name="Howarth S."/>
            <person name="Huckle E.J."/>
            <person name="Hunt S."/>
            <person name="Jagels K."/>
            <person name="James K.D."/>
            <person name="Jones L."/>
            <person name="Jones M."/>
            <person name="Leather S."/>
            <person name="McDonald S."/>
            <person name="McLean J."/>
            <person name="Mooney P."/>
            <person name="Moule S."/>
            <person name="Mungall K.L."/>
            <person name="Murphy L.D."/>
            <person name="Niblett D."/>
            <person name="Odell C."/>
            <person name="Oliver K."/>
            <person name="O'Neil S."/>
            <person name="Pearson D."/>
            <person name="Quail M.A."/>
            <person name="Rabbinowitsch E."/>
            <person name="Rutherford K.M."/>
            <person name="Rutter S."/>
            <person name="Saunders D."/>
            <person name="Seeger K."/>
            <person name="Sharp S."/>
            <person name="Skelton J."/>
            <person name="Simmonds M.N."/>
            <person name="Squares R."/>
            <person name="Squares S."/>
            <person name="Stevens K."/>
            <person name="Taylor K."/>
            <person name="Taylor R.G."/>
            <person name="Tivey A."/>
            <person name="Walsh S.V."/>
            <person name="Warren T."/>
            <person name="Whitehead S."/>
            <person name="Woodward J.R."/>
            <person name="Volckaert G."/>
            <person name="Aert R."/>
            <person name="Robben J."/>
            <person name="Grymonprez B."/>
            <person name="Weltjens I."/>
            <person name="Vanstreels E."/>
            <person name="Rieger M."/>
            <person name="Schaefer M."/>
            <person name="Mueller-Auer S."/>
            <person name="Gabel C."/>
            <person name="Fuchs M."/>
            <person name="Duesterhoeft A."/>
            <person name="Fritzc C."/>
            <person name="Holzer E."/>
            <person name="Moestl D."/>
            <person name="Hilbert H."/>
            <person name="Borzym K."/>
            <person name="Langer I."/>
            <person name="Beck A."/>
            <person name="Lehrach H."/>
            <person name="Reinhardt R."/>
            <person name="Pohl T.M."/>
            <person name="Eger P."/>
            <person name="Zimmermann W."/>
            <person name="Wedler H."/>
            <person name="Wambutt R."/>
            <person name="Purnelle B."/>
            <person name="Goffeau A."/>
            <person name="Cadieu E."/>
            <person name="Dreano S."/>
            <person name="Gloux S."/>
            <person name="Lelaure V."/>
            <person name="Mottier S."/>
            <person name="Galibert F."/>
            <person name="Aves S.J."/>
            <person name="Xiang Z."/>
            <person name="Hunt C."/>
            <person name="Moore K."/>
            <person name="Hurst S.M."/>
            <person name="Lucas M."/>
            <person name="Rochet M."/>
            <person name="Gaillardin C."/>
            <person name="Tallada V.A."/>
            <person name="Garzon A."/>
            <person name="Thode G."/>
            <person name="Daga R.R."/>
            <person name="Cruzado L."/>
            <person name="Jimenez J."/>
            <person name="Sanchez M."/>
            <person name="del Rey F."/>
            <person name="Benito J."/>
            <person name="Dominguez A."/>
            <person name="Revuelta J.L."/>
            <person name="Moreno S."/>
            <person name="Armstrong J."/>
            <person name="Forsburg S.L."/>
            <person name="Cerutti L."/>
            <person name="Lowe T."/>
            <person name="McCombie W.R."/>
            <person name="Paulsen I."/>
            <person name="Potashkin J."/>
            <person name="Shpakovski G.V."/>
            <person name="Ussery D."/>
            <person name="Barrell B.G."/>
            <person name="Nurse P."/>
        </authorList>
    </citation>
    <scope>NUCLEOTIDE SEQUENCE [LARGE SCALE GENOMIC DNA]</scope>
    <source>
        <strain>972 / ATCC 24843</strain>
    </source>
</reference>
<reference key="2">
    <citation type="journal article" date="2000" name="Genes Cells">
        <title>Large-scale screening of intracellular protein localization in living fission yeast cells by the use of a GFP-fusion genomic DNA library.</title>
        <authorList>
            <person name="Ding D.-Q."/>
            <person name="Tomita Y."/>
            <person name="Yamamoto A."/>
            <person name="Chikashige Y."/>
            <person name="Haraguchi T."/>
            <person name="Hiraoka Y."/>
        </authorList>
    </citation>
    <scope>NUCLEOTIDE SEQUENCE [LARGE SCALE GENOMIC DNA] OF 214-414</scope>
    <scope>SUBCELLULAR LOCATION</scope>
    <source>
        <strain>ATCC 38364 / 968</strain>
    </source>
</reference>
<reference key="3">
    <citation type="journal article" date="2006" name="Nat. Biotechnol.">
        <title>ORFeome cloning and global analysis of protein localization in the fission yeast Schizosaccharomyces pombe.</title>
        <authorList>
            <person name="Matsuyama A."/>
            <person name="Arai R."/>
            <person name="Yashiroda Y."/>
            <person name="Shirai A."/>
            <person name="Kamata A."/>
            <person name="Sekido S."/>
            <person name="Kobayashi Y."/>
            <person name="Hashimoto A."/>
            <person name="Hamamoto M."/>
            <person name="Hiraoka Y."/>
            <person name="Horinouchi S."/>
            <person name="Yoshida M."/>
        </authorList>
    </citation>
    <scope>SUBCELLULAR LOCATION [LARGE SCALE ANALYSIS]</scope>
</reference>
<reference key="4">
    <citation type="journal article" date="2008" name="Mol. Biol. Cell">
        <title>The actomyosin ring recruits early secretory compartments to the division site in fission yeast.</title>
        <authorList>
            <person name="Vjestica A."/>
            <person name="Tang X.Z."/>
            <person name="Oliferenko S."/>
        </authorList>
    </citation>
    <scope>SUBCELLULAR LOCATION</scope>
</reference>
<gene>
    <name type="primary">anp1</name>
    <name type="ORF">SPBC1734.04</name>
</gene>
<dbReference type="EMBL" id="CU329671">
    <property type="protein sequence ID" value="CAA21290.2"/>
    <property type="molecule type" value="Genomic_DNA"/>
</dbReference>
<dbReference type="EMBL" id="AB028011">
    <property type="protein sequence ID" value="BAA87315.1"/>
    <property type="molecule type" value="Genomic_DNA"/>
</dbReference>
<dbReference type="PIR" id="T39651">
    <property type="entry name" value="T39651"/>
</dbReference>
<dbReference type="RefSeq" id="NP_595421.2">
    <property type="nucleotide sequence ID" value="NM_001021328.3"/>
</dbReference>
<dbReference type="SMR" id="O74745"/>
<dbReference type="BioGRID" id="276240">
    <property type="interactions" value="3"/>
</dbReference>
<dbReference type="FunCoup" id="O74745">
    <property type="interactions" value="34"/>
</dbReference>
<dbReference type="STRING" id="284812.O74745"/>
<dbReference type="CAZy" id="GT62">
    <property type="family name" value="Glycosyltransferase Family 62"/>
</dbReference>
<dbReference type="GlyCosmos" id="O74745">
    <property type="glycosylation" value="1 site, No reported glycans"/>
</dbReference>
<dbReference type="iPTMnet" id="O74745"/>
<dbReference type="PaxDb" id="4896-SPBC1734.04.1"/>
<dbReference type="EnsemblFungi" id="SPBC1734.04.1">
    <property type="protein sequence ID" value="SPBC1734.04.1:pep"/>
    <property type="gene ID" value="SPBC1734.04"/>
</dbReference>
<dbReference type="GeneID" id="2539685"/>
<dbReference type="KEGG" id="spo:2539685"/>
<dbReference type="PomBase" id="SPBC1734.04">
    <property type="gene designation" value="anp1"/>
</dbReference>
<dbReference type="VEuPathDB" id="FungiDB:SPBC1734.04"/>
<dbReference type="eggNOG" id="ENOG502QVDT">
    <property type="taxonomic scope" value="Eukaryota"/>
</dbReference>
<dbReference type="HOGENOM" id="CLU_017872_0_0_1"/>
<dbReference type="InParanoid" id="O74745"/>
<dbReference type="OMA" id="EYPTSIF"/>
<dbReference type="PhylomeDB" id="O74745"/>
<dbReference type="PRO" id="PR:O74745"/>
<dbReference type="Proteomes" id="UP000002485">
    <property type="component" value="Chromosome II"/>
</dbReference>
<dbReference type="GO" id="GO:0005789">
    <property type="term" value="C:endoplasmic reticulum membrane"/>
    <property type="evidence" value="ECO:0007669"/>
    <property type="project" value="UniProtKB-SubCell"/>
</dbReference>
<dbReference type="GO" id="GO:0005794">
    <property type="term" value="C:Golgi apparatus"/>
    <property type="evidence" value="ECO:0000314"/>
    <property type="project" value="PomBase"/>
</dbReference>
<dbReference type="GO" id="GO:0000136">
    <property type="term" value="C:mannan polymerase complex"/>
    <property type="evidence" value="ECO:0000318"/>
    <property type="project" value="GO_Central"/>
</dbReference>
<dbReference type="GO" id="GO:0140497">
    <property type="term" value="C:mannan polymerase II complex"/>
    <property type="evidence" value="ECO:0000353"/>
    <property type="project" value="PomBase"/>
</dbReference>
<dbReference type="GO" id="GO:0000030">
    <property type="term" value="F:mannosyltransferase activity"/>
    <property type="evidence" value="ECO:0000315"/>
    <property type="project" value="PomBase"/>
</dbReference>
<dbReference type="GO" id="GO:0000032">
    <property type="term" value="P:cell wall mannoprotein biosynthetic process"/>
    <property type="evidence" value="ECO:0000318"/>
    <property type="project" value="GO_Central"/>
</dbReference>
<dbReference type="GO" id="GO:0006487">
    <property type="term" value="P:protein N-linked glycosylation"/>
    <property type="evidence" value="ECO:0000318"/>
    <property type="project" value="GO_Central"/>
</dbReference>
<dbReference type="GO" id="GO:0018279">
    <property type="term" value="P:protein N-linked glycosylation via asparagine"/>
    <property type="evidence" value="ECO:0000315"/>
    <property type="project" value="PomBase"/>
</dbReference>
<dbReference type="FunFam" id="3.90.550.10:FF:000017">
    <property type="entry name" value="Mannan polymerase II complex ANP1 subunit"/>
    <property type="match status" value="1"/>
</dbReference>
<dbReference type="Gene3D" id="3.90.550.10">
    <property type="entry name" value="Spore Coat Polysaccharide Biosynthesis Protein SpsA, Chain A"/>
    <property type="match status" value="1"/>
</dbReference>
<dbReference type="InterPro" id="IPR052086">
    <property type="entry name" value="Mannan_Polymerase_Subunit"/>
</dbReference>
<dbReference type="InterPro" id="IPR029044">
    <property type="entry name" value="Nucleotide-diphossugar_trans"/>
</dbReference>
<dbReference type="PANTHER" id="PTHR43083">
    <property type="entry name" value="MANNAN POLYMERASE II"/>
    <property type="match status" value="1"/>
</dbReference>
<dbReference type="PANTHER" id="PTHR43083:SF2">
    <property type="entry name" value="MANNAN POLYMERASE II COMPLEX ANP1 SUBUNIT"/>
    <property type="match status" value="1"/>
</dbReference>
<dbReference type="Pfam" id="PF03452">
    <property type="entry name" value="Anp1"/>
    <property type="match status" value="1"/>
</dbReference>
<dbReference type="SUPFAM" id="SSF53448">
    <property type="entry name" value="Nucleotide-diphospho-sugar transferases"/>
    <property type="match status" value="1"/>
</dbReference>
<feature type="chain" id="PRO_0000193673" description="Mannan polymerase II complex anp1 subunit">
    <location>
        <begin position="1"/>
        <end position="430"/>
    </location>
</feature>
<feature type="topological domain" description="Cytoplasmic" evidence="3">
    <location>
        <begin position="1"/>
        <end position="37"/>
    </location>
</feature>
<feature type="transmembrane region" description="Helical; Signal-anchor for type II membrane protein" evidence="3">
    <location>
        <begin position="38"/>
        <end position="57"/>
    </location>
</feature>
<feature type="topological domain" description="Lumenal" evidence="3">
    <location>
        <begin position="58"/>
        <end position="430"/>
    </location>
</feature>
<feature type="region of interest" description="Disordered" evidence="4">
    <location>
        <begin position="1"/>
        <end position="28"/>
    </location>
</feature>
<feature type="region of interest" description="Disordered" evidence="4">
    <location>
        <begin position="387"/>
        <end position="430"/>
    </location>
</feature>
<feature type="compositionally biased region" description="Polar residues" evidence="4">
    <location>
        <begin position="16"/>
        <end position="28"/>
    </location>
</feature>
<feature type="compositionally biased region" description="Basic and acidic residues" evidence="4">
    <location>
        <begin position="387"/>
        <end position="403"/>
    </location>
</feature>
<feature type="glycosylation site" description="N-linked (GlcNAc...) asparagine" evidence="3">
    <location>
        <position position="122"/>
    </location>
</feature>
<comment type="function">
    <text evidence="1">The M-Pol II complex possesses alpha-1,6-mannosyltransferase activity and is probably involved in the elongation of the mannan backbone of N-linked glycans on cell wall and periplasmic proteins.</text>
</comment>
<comment type="subunit">
    <text evidence="1">Component of the M-Pol II complex.</text>
</comment>
<comment type="subcellular location">
    <subcellularLocation>
        <location evidence="5">Endoplasmic reticulum membrane</location>
        <topology evidence="2">Single-pass type II membrane protein</topology>
    </subcellularLocation>
    <subcellularLocation>
        <location evidence="5">Golgi apparatus membrane</location>
        <topology evidence="2">Single-pass type II membrane protein</topology>
    </subcellularLocation>
    <text evidence="2 6">Cis-Golgi (PubMed:18184749). Recycles between endoplasmic reticulum and Golgi (By similarity).</text>
</comment>
<comment type="similarity">
    <text evidence="7">Belongs to the ANP1/MMN9/VAN1 family.</text>
</comment>